<organism>
    <name type="scientific">Rhodococcus erythropolis (strain PR4 / NBRC 100887)</name>
    <dbReference type="NCBI Taxonomy" id="234621"/>
    <lineage>
        <taxon>Bacteria</taxon>
        <taxon>Bacillati</taxon>
        <taxon>Actinomycetota</taxon>
        <taxon>Actinomycetes</taxon>
        <taxon>Mycobacteriales</taxon>
        <taxon>Nocardiaceae</taxon>
        <taxon>Rhodococcus</taxon>
        <taxon>Rhodococcus erythropolis group</taxon>
    </lineage>
</organism>
<feature type="chain" id="PRO_1000202783" description="Translation initiation factor IF-2">
    <location>
        <begin position="1"/>
        <end position="981"/>
    </location>
</feature>
<feature type="domain" description="tr-type G">
    <location>
        <begin position="477"/>
        <end position="649"/>
    </location>
</feature>
<feature type="region of interest" description="Disordered" evidence="3">
    <location>
        <begin position="31"/>
        <end position="370"/>
    </location>
</feature>
<feature type="region of interest" description="G1" evidence="1">
    <location>
        <begin position="486"/>
        <end position="493"/>
    </location>
</feature>
<feature type="region of interest" description="G2" evidence="1">
    <location>
        <begin position="511"/>
        <end position="515"/>
    </location>
</feature>
<feature type="region of interest" description="G3" evidence="1">
    <location>
        <begin position="536"/>
        <end position="539"/>
    </location>
</feature>
<feature type="region of interest" description="G4" evidence="1">
    <location>
        <begin position="590"/>
        <end position="593"/>
    </location>
</feature>
<feature type="region of interest" description="G5" evidence="1">
    <location>
        <begin position="626"/>
        <end position="628"/>
    </location>
</feature>
<feature type="compositionally biased region" description="Low complexity" evidence="3">
    <location>
        <begin position="64"/>
        <end position="87"/>
    </location>
</feature>
<feature type="compositionally biased region" description="Pro residues" evidence="3">
    <location>
        <begin position="88"/>
        <end position="111"/>
    </location>
</feature>
<feature type="compositionally biased region" description="Low complexity" evidence="3">
    <location>
        <begin position="112"/>
        <end position="121"/>
    </location>
</feature>
<feature type="compositionally biased region" description="Pro residues" evidence="3">
    <location>
        <begin position="136"/>
        <end position="145"/>
    </location>
</feature>
<feature type="compositionally biased region" description="Low complexity" evidence="3">
    <location>
        <begin position="146"/>
        <end position="165"/>
    </location>
</feature>
<feature type="compositionally biased region" description="Pro residues" evidence="3">
    <location>
        <begin position="256"/>
        <end position="269"/>
    </location>
</feature>
<feature type="compositionally biased region" description="Low complexity" evidence="3">
    <location>
        <begin position="270"/>
        <end position="279"/>
    </location>
</feature>
<feature type="compositionally biased region" description="Gly residues" evidence="3">
    <location>
        <begin position="280"/>
        <end position="339"/>
    </location>
</feature>
<feature type="compositionally biased region" description="Basic residues" evidence="3">
    <location>
        <begin position="356"/>
        <end position="365"/>
    </location>
</feature>
<feature type="binding site" evidence="2">
    <location>
        <begin position="486"/>
        <end position="493"/>
    </location>
    <ligand>
        <name>GTP</name>
        <dbReference type="ChEBI" id="CHEBI:37565"/>
    </ligand>
</feature>
<feature type="binding site" evidence="2">
    <location>
        <begin position="536"/>
        <end position="540"/>
    </location>
    <ligand>
        <name>GTP</name>
        <dbReference type="ChEBI" id="CHEBI:37565"/>
    </ligand>
</feature>
<feature type="binding site" evidence="2">
    <location>
        <begin position="590"/>
        <end position="593"/>
    </location>
    <ligand>
        <name>GTP</name>
        <dbReference type="ChEBI" id="CHEBI:37565"/>
    </ligand>
</feature>
<accession>C0ZYA5</accession>
<gene>
    <name evidence="2" type="primary">infB</name>
    <name type="ordered locus">RER_26320</name>
</gene>
<proteinExistence type="inferred from homology"/>
<name>IF2_RHOE4</name>
<dbReference type="EMBL" id="AP008957">
    <property type="protein sequence ID" value="BAH33340.1"/>
    <property type="molecule type" value="Genomic_DNA"/>
</dbReference>
<dbReference type="RefSeq" id="WP_020907439.1">
    <property type="nucleotide sequence ID" value="NC_012490.1"/>
</dbReference>
<dbReference type="SMR" id="C0ZYA5"/>
<dbReference type="KEGG" id="rer:RER_26320"/>
<dbReference type="eggNOG" id="COG0481">
    <property type="taxonomic scope" value="Bacteria"/>
</dbReference>
<dbReference type="eggNOG" id="COG0532">
    <property type="taxonomic scope" value="Bacteria"/>
</dbReference>
<dbReference type="HOGENOM" id="CLU_006301_9_3_11"/>
<dbReference type="Proteomes" id="UP000002204">
    <property type="component" value="Chromosome"/>
</dbReference>
<dbReference type="GO" id="GO:0005829">
    <property type="term" value="C:cytosol"/>
    <property type="evidence" value="ECO:0007669"/>
    <property type="project" value="TreeGrafter"/>
</dbReference>
<dbReference type="GO" id="GO:0005525">
    <property type="term" value="F:GTP binding"/>
    <property type="evidence" value="ECO:0007669"/>
    <property type="project" value="UniProtKB-KW"/>
</dbReference>
<dbReference type="GO" id="GO:0003924">
    <property type="term" value="F:GTPase activity"/>
    <property type="evidence" value="ECO:0007669"/>
    <property type="project" value="UniProtKB-UniRule"/>
</dbReference>
<dbReference type="GO" id="GO:0003743">
    <property type="term" value="F:translation initiation factor activity"/>
    <property type="evidence" value="ECO:0007669"/>
    <property type="project" value="UniProtKB-UniRule"/>
</dbReference>
<dbReference type="CDD" id="cd01887">
    <property type="entry name" value="IF2_eIF5B"/>
    <property type="match status" value="1"/>
</dbReference>
<dbReference type="CDD" id="cd03702">
    <property type="entry name" value="IF2_mtIF2_II"/>
    <property type="match status" value="1"/>
</dbReference>
<dbReference type="CDD" id="cd03692">
    <property type="entry name" value="mtIF2_IVc"/>
    <property type="match status" value="1"/>
</dbReference>
<dbReference type="FunFam" id="2.40.30.10:FF:000007">
    <property type="entry name" value="Translation initiation factor IF-2"/>
    <property type="match status" value="1"/>
</dbReference>
<dbReference type="FunFam" id="2.40.30.10:FF:000008">
    <property type="entry name" value="Translation initiation factor IF-2"/>
    <property type="match status" value="1"/>
</dbReference>
<dbReference type="FunFam" id="3.40.50.10050:FF:000001">
    <property type="entry name" value="Translation initiation factor IF-2"/>
    <property type="match status" value="1"/>
</dbReference>
<dbReference type="FunFam" id="3.40.50.300:FF:000019">
    <property type="entry name" value="Translation initiation factor IF-2"/>
    <property type="match status" value="1"/>
</dbReference>
<dbReference type="Gene3D" id="1.10.10.2480">
    <property type="match status" value="1"/>
</dbReference>
<dbReference type="Gene3D" id="3.40.50.300">
    <property type="entry name" value="P-loop containing nucleotide triphosphate hydrolases"/>
    <property type="match status" value="1"/>
</dbReference>
<dbReference type="Gene3D" id="2.40.30.10">
    <property type="entry name" value="Translation factors"/>
    <property type="match status" value="2"/>
</dbReference>
<dbReference type="Gene3D" id="3.40.50.10050">
    <property type="entry name" value="Translation initiation factor IF- 2, domain 3"/>
    <property type="match status" value="1"/>
</dbReference>
<dbReference type="HAMAP" id="MF_00100_B">
    <property type="entry name" value="IF_2_B"/>
    <property type="match status" value="1"/>
</dbReference>
<dbReference type="InterPro" id="IPR053905">
    <property type="entry name" value="EF-G-like_DII"/>
</dbReference>
<dbReference type="InterPro" id="IPR004161">
    <property type="entry name" value="EFTu-like_2"/>
</dbReference>
<dbReference type="InterPro" id="IPR044145">
    <property type="entry name" value="IF2_II"/>
</dbReference>
<dbReference type="InterPro" id="IPR006847">
    <property type="entry name" value="IF2_N"/>
</dbReference>
<dbReference type="InterPro" id="IPR027417">
    <property type="entry name" value="P-loop_NTPase"/>
</dbReference>
<dbReference type="InterPro" id="IPR005225">
    <property type="entry name" value="Small_GTP-bd"/>
</dbReference>
<dbReference type="InterPro" id="IPR000795">
    <property type="entry name" value="T_Tr_GTP-bd_dom"/>
</dbReference>
<dbReference type="InterPro" id="IPR000178">
    <property type="entry name" value="TF_IF2_bacterial-like"/>
</dbReference>
<dbReference type="InterPro" id="IPR015760">
    <property type="entry name" value="TIF_IF2"/>
</dbReference>
<dbReference type="InterPro" id="IPR023115">
    <property type="entry name" value="TIF_IF2_dom3"/>
</dbReference>
<dbReference type="InterPro" id="IPR036925">
    <property type="entry name" value="TIF_IF2_dom3_sf"/>
</dbReference>
<dbReference type="InterPro" id="IPR009000">
    <property type="entry name" value="Transl_B-barrel_sf"/>
</dbReference>
<dbReference type="NCBIfam" id="TIGR00487">
    <property type="entry name" value="IF-2"/>
    <property type="match status" value="1"/>
</dbReference>
<dbReference type="NCBIfam" id="TIGR00231">
    <property type="entry name" value="small_GTP"/>
    <property type="match status" value="1"/>
</dbReference>
<dbReference type="PANTHER" id="PTHR43381:SF5">
    <property type="entry name" value="TR-TYPE G DOMAIN-CONTAINING PROTEIN"/>
    <property type="match status" value="1"/>
</dbReference>
<dbReference type="PANTHER" id="PTHR43381">
    <property type="entry name" value="TRANSLATION INITIATION FACTOR IF-2-RELATED"/>
    <property type="match status" value="1"/>
</dbReference>
<dbReference type="Pfam" id="PF22042">
    <property type="entry name" value="EF-G_D2"/>
    <property type="match status" value="1"/>
</dbReference>
<dbReference type="Pfam" id="PF00009">
    <property type="entry name" value="GTP_EFTU"/>
    <property type="match status" value="1"/>
</dbReference>
<dbReference type="Pfam" id="PF03144">
    <property type="entry name" value="GTP_EFTU_D2"/>
    <property type="match status" value="1"/>
</dbReference>
<dbReference type="Pfam" id="PF11987">
    <property type="entry name" value="IF-2"/>
    <property type="match status" value="1"/>
</dbReference>
<dbReference type="Pfam" id="PF04760">
    <property type="entry name" value="IF2_N"/>
    <property type="match status" value="2"/>
</dbReference>
<dbReference type="PRINTS" id="PR00315">
    <property type="entry name" value="ELONGATNFCT"/>
</dbReference>
<dbReference type="SUPFAM" id="SSF52156">
    <property type="entry name" value="Initiation factor IF2/eIF5b, domain 3"/>
    <property type="match status" value="1"/>
</dbReference>
<dbReference type="SUPFAM" id="SSF52540">
    <property type="entry name" value="P-loop containing nucleoside triphosphate hydrolases"/>
    <property type="match status" value="1"/>
</dbReference>
<dbReference type="SUPFAM" id="SSF50447">
    <property type="entry name" value="Translation proteins"/>
    <property type="match status" value="2"/>
</dbReference>
<dbReference type="PROSITE" id="PS51722">
    <property type="entry name" value="G_TR_2"/>
    <property type="match status" value="1"/>
</dbReference>
<keyword id="KW-0963">Cytoplasm</keyword>
<keyword id="KW-0342">GTP-binding</keyword>
<keyword id="KW-0396">Initiation factor</keyword>
<keyword id="KW-0547">Nucleotide-binding</keyword>
<keyword id="KW-0648">Protein biosynthesis</keyword>
<comment type="function">
    <text evidence="2">One of the essential components for the initiation of protein synthesis. Protects formylmethionyl-tRNA from spontaneous hydrolysis and promotes its binding to the 30S ribosomal subunits. Also involved in the hydrolysis of GTP during the formation of the 70S ribosomal complex.</text>
</comment>
<comment type="subcellular location">
    <subcellularLocation>
        <location evidence="2">Cytoplasm</location>
    </subcellularLocation>
</comment>
<comment type="similarity">
    <text evidence="2">Belongs to the TRAFAC class translation factor GTPase superfamily. Classic translation factor GTPase family. IF-2 subfamily.</text>
</comment>
<reference key="1">
    <citation type="submission" date="2005-03" db="EMBL/GenBank/DDBJ databases">
        <title>Comparison of the complete genome sequences of Rhodococcus erythropolis PR4 and Rhodococcus opacus B4.</title>
        <authorList>
            <person name="Takarada H."/>
            <person name="Sekine M."/>
            <person name="Hosoyama A."/>
            <person name="Yamada R."/>
            <person name="Fujisawa T."/>
            <person name="Omata S."/>
            <person name="Shimizu A."/>
            <person name="Tsukatani N."/>
            <person name="Tanikawa S."/>
            <person name="Fujita N."/>
            <person name="Harayama S."/>
        </authorList>
    </citation>
    <scope>NUCLEOTIDE SEQUENCE [LARGE SCALE GENOMIC DNA]</scope>
    <source>
        <strain>PR4 / NBRC 100887</strain>
    </source>
</reference>
<evidence type="ECO:0000250" key="1"/>
<evidence type="ECO:0000255" key="2">
    <source>
        <dbReference type="HAMAP-Rule" id="MF_00100"/>
    </source>
</evidence>
<evidence type="ECO:0000256" key="3">
    <source>
        <dbReference type="SAM" id="MobiDB-lite"/>
    </source>
</evidence>
<protein>
    <recommendedName>
        <fullName evidence="2">Translation initiation factor IF-2</fullName>
    </recommendedName>
</protein>
<sequence>MAGKARVHELAKELGVTSKELLATLKEQGEFVKSASSTVEAPVARRLRESFPSAGGAETKSETGAAAPAARPAAKPGAPSPSAAKPGGPRPGPKPAAPAPAAPAAPAPAAPAAPAAAAPAAPSAPVPTPTFNAPKPAQPARPAPAAPAASAPAAPAAPAAPSTGAKPGGPRPGPKAPRVGNNPYSSAPAERPAPRPAPGAPRPGAGQGGSRPAPGQGGPRPAPGQGGPRPAPGQGGPRPAPGQGGPRPPAGQGGPRPSPGSMPPRPNPGAMPARSARPAPGGGGRPGRPGGAPGGRPGGGGGGYRGGGAPGAGAGAGAPGGAAPAGGFRGRPGGGGRPGQRGAAAGAFGRPGGAVRRGRKSKRAKRAEYESMQAPAVGGVRLPRGNGETIRLARGASLSDFADKIDANPAALVQALFNLGEMVTATQSVNDETLELLGGEMNYVVQVVSPEDEDRELLDSFDLTYGEDAGGEEDLESRPPVVTVMGHVDHGKTRLLDVIRKANVREGEAGGITQHIGAYQVLTELEGNERLVTFIDTPGHEAFTAMRARGAKATDLAILVVAADDGVMPQTVEAINHAQAADVPIVVAVNKIDKEGANPDKIRQQLTEYGLVAEEYGGDTMFVDISAKQGLNIDALLEAVLLTADASLDLRANPDMDAQGVAIEAHLDRGRGPVATVLIQRGTLRVGDSIVAGDAYGRVRRMVDEHGQDVHEALPSRPVQVIGFTSVPGAGDNLLVVDEDRIARQIADRRNARKRNALAAKSRKRISLDDLDAALKEHSQLNLILKGDNSGTVEALEEALLGIPIDDEVQLRVIDRGVGGITETNVNLAAASNAIIIGFNVRAEGKATELANREGVDIRYYSVIYQAIDEVEKALKGLLKPVYEEVELGKAEIRAMFRSSKIGNIAGCLVTSGSIRRNAKARLIRDSKVIAETVTISSLKREKEDATEVREGYECGLTVTYSDIKIGDVLECYELREKPRD</sequence>